<accession>Q326I2</accession>
<sequence length="273" mass="30420">MNNRVHQGHLARKRFGQNFLNDQFVIDSIVSAINPQKGQAMVEIGPGLAALTEPVGERLDQLTVIELDRDLAARLQTHPFLGPKLTIYQQDAMTFNFGELAEKMGQPLRVFGNLPYNISTPLMFHLFSYTDAIADMHFMLQKEVVNRLVAGPNSKAYGRLSVMAQYYCNVIPVLEVPPSAFTPPPKVDSAVVRLVPHATMPHPVKDVRVLSRITTEAFNQRRKTIRNSLGNLFSVEVLTGMGIDPAMRAENISVAQYCQMANYLAENAPLQES</sequence>
<reference key="1">
    <citation type="journal article" date="2005" name="Nucleic Acids Res.">
        <title>Genome dynamics and diversity of Shigella species, the etiologic agents of bacillary dysentery.</title>
        <authorList>
            <person name="Yang F."/>
            <person name="Yang J."/>
            <person name="Zhang X."/>
            <person name="Chen L."/>
            <person name="Jiang Y."/>
            <person name="Yan Y."/>
            <person name="Tang X."/>
            <person name="Wang J."/>
            <person name="Xiong Z."/>
            <person name="Dong J."/>
            <person name="Xue Y."/>
            <person name="Zhu Y."/>
            <person name="Xu X."/>
            <person name="Sun L."/>
            <person name="Chen S."/>
            <person name="Nie H."/>
            <person name="Peng J."/>
            <person name="Xu J."/>
            <person name="Wang Y."/>
            <person name="Yuan Z."/>
            <person name="Wen Y."/>
            <person name="Yao Z."/>
            <person name="Shen Y."/>
            <person name="Qiang B."/>
            <person name="Hou Y."/>
            <person name="Yu J."/>
            <person name="Jin Q."/>
        </authorList>
    </citation>
    <scope>NUCLEOTIDE SEQUENCE [LARGE SCALE GENOMIC DNA]</scope>
    <source>
        <strain>Sb227</strain>
    </source>
</reference>
<protein>
    <recommendedName>
        <fullName evidence="1">Ribosomal RNA small subunit methyltransferase A</fullName>
        <ecNumber evidence="1">2.1.1.182</ecNumber>
    </recommendedName>
    <alternativeName>
        <fullName evidence="1">16S rRNA (adenine(1518)-N(6)/adenine(1519)-N(6))-dimethyltransferase</fullName>
    </alternativeName>
    <alternativeName>
        <fullName evidence="1">16S rRNA dimethyladenosine transferase</fullName>
    </alternativeName>
    <alternativeName>
        <fullName evidence="1">16S rRNA dimethylase</fullName>
    </alternativeName>
    <alternativeName>
        <fullName evidence="1">S-adenosylmethionine-6-N', N'-adenosyl(rRNA) dimethyltransferase</fullName>
    </alternativeName>
</protein>
<comment type="function">
    <text evidence="1">Specifically dimethylates two adjacent adenosines (A1518 and A1519) in the loop of a conserved hairpin near the 3'-end of 16S rRNA in the 30S particle. May play a critical role in biogenesis of 30S subunits.</text>
</comment>
<comment type="catalytic activity">
    <reaction evidence="1">
        <text>adenosine(1518)/adenosine(1519) in 16S rRNA + 4 S-adenosyl-L-methionine = N(6)-dimethyladenosine(1518)/N(6)-dimethyladenosine(1519) in 16S rRNA + 4 S-adenosyl-L-homocysteine + 4 H(+)</text>
        <dbReference type="Rhea" id="RHEA:19609"/>
        <dbReference type="Rhea" id="RHEA-COMP:10232"/>
        <dbReference type="Rhea" id="RHEA-COMP:10233"/>
        <dbReference type="ChEBI" id="CHEBI:15378"/>
        <dbReference type="ChEBI" id="CHEBI:57856"/>
        <dbReference type="ChEBI" id="CHEBI:59789"/>
        <dbReference type="ChEBI" id="CHEBI:74411"/>
        <dbReference type="ChEBI" id="CHEBI:74493"/>
        <dbReference type="EC" id="2.1.1.182"/>
    </reaction>
</comment>
<comment type="subcellular location">
    <subcellularLocation>
        <location evidence="1">Cytoplasm</location>
    </subcellularLocation>
</comment>
<comment type="similarity">
    <text evidence="1">Belongs to the class I-like SAM-binding methyltransferase superfamily. rRNA adenine N(6)-methyltransferase family. RsmA subfamily.</text>
</comment>
<proteinExistence type="inferred from homology"/>
<name>RSMA_SHIBS</name>
<organism>
    <name type="scientific">Shigella boydii serotype 4 (strain Sb227)</name>
    <dbReference type="NCBI Taxonomy" id="300268"/>
    <lineage>
        <taxon>Bacteria</taxon>
        <taxon>Pseudomonadati</taxon>
        <taxon>Pseudomonadota</taxon>
        <taxon>Gammaproteobacteria</taxon>
        <taxon>Enterobacterales</taxon>
        <taxon>Enterobacteriaceae</taxon>
        <taxon>Shigella</taxon>
    </lineage>
</organism>
<gene>
    <name evidence="1" type="primary">rsmA</name>
    <name evidence="1" type="synonym">ksgA</name>
    <name type="ordered locus">SBO_0040</name>
</gene>
<dbReference type="EC" id="2.1.1.182" evidence="1"/>
<dbReference type="EMBL" id="CP000036">
    <property type="protein sequence ID" value="ABB64776.1"/>
    <property type="molecule type" value="Genomic_DNA"/>
</dbReference>
<dbReference type="RefSeq" id="WP_001065381.1">
    <property type="nucleotide sequence ID" value="NC_007613.1"/>
</dbReference>
<dbReference type="SMR" id="Q326I2"/>
<dbReference type="GeneID" id="93777384"/>
<dbReference type="KEGG" id="sbo:SBO_0040"/>
<dbReference type="HOGENOM" id="CLU_041220_0_1_6"/>
<dbReference type="Proteomes" id="UP000007067">
    <property type="component" value="Chromosome"/>
</dbReference>
<dbReference type="GO" id="GO:0005829">
    <property type="term" value="C:cytosol"/>
    <property type="evidence" value="ECO:0007669"/>
    <property type="project" value="TreeGrafter"/>
</dbReference>
<dbReference type="GO" id="GO:0052908">
    <property type="term" value="F:16S rRNA (adenine(1518)-N(6)/adenine(1519)-N(6))-dimethyltransferase activity"/>
    <property type="evidence" value="ECO:0007669"/>
    <property type="project" value="UniProtKB-EC"/>
</dbReference>
<dbReference type="GO" id="GO:0003723">
    <property type="term" value="F:RNA binding"/>
    <property type="evidence" value="ECO:0007669"/>
    <property type="project" value="UniProtKB-KW"/>
</dbReference>
<dbReference type="FunFam" id="1.10.8.100:FF:000001">
    <property type="entry name" value="Ribosomal RNA small subunit methyltransferase A"/>
    <property type="match status" value="1"/>
</dbReference>
<dbReference type="FunFam" id="3.40.50.150:FF:000006">
    <property type="entry name" value="Ribosomal RNA small subunit methyltransferase A"/>
    <property type="match status" value="1"/>
</dbReference>
<dbReference type="Gene3D" id="1.10.8.100">
    <property type="entry name" value="Ribosomal RNA adenine dimethylase-like, domain 2"/>
    <property type="match status" value="1"/>
</dbReference>
<dbReference type="Gene3D" id="3.40.50.150">
    <property type="entry name" value="Vaccinia Virus protein VP39"/>
    <property type="match status" value="1"/>
</dbReference>
<dbReference type="HAMAP" id="MF_00607">
    <property type="entry name" value="16SrRNA_methyltr_A"/>
    <property type="match status" value="1"/>
</dbReference>
<dbReference type="InterPro" id="IPR001737">
    <property type="entry name" value="KsgA/Erm"/>
</dbReference>
<dbReference type="InterPro" id="IPR023165">
    <property type="entry name" value="rRNA_Ade_diMease-like_C"/>
</dbReference>
<dbReference type="InterPro" id="IPR020596">
    <property type="entry name" value="rRNA_Ade_Mease_Trfase_CS"/>
</dbReference>
<dbReference type="InterPro" id="IPR020598">
    <property type="entry name" value="rRNA_Ade_methylase_Trfase_N"/>
</dbReference>
<dbReference type="InterPro" id="IPR011530">
    <property type="entry name" value="rRNA_adenine_dimethylase"/>
</dbReference>
<dbReference type="InterPro" id="IPR029063">
    <property type="entry name" value="SAM-dependent_MTases_sf"/>
</dbReference>
<dbReference type="NCBIfam" id="TIGR00755">
    <property type="entry name" value="ksgA"/>
    <property type="match status" value="1"/>
</dbReference>
<dbReference type="PANTHER" id="PTHR11727">
    <property type="entry name" value="DIMETHYLADENOSINE TRANSFERASE"/>
    <property type="match status" value="1"/>
</dbReference>
<dbReference type="PANTHER" id="PTHR11727:SF7">
    <property type="entry name" value="DIMETHYLADENOSINE TRANSFERASE-RELATED"/>
    <property type="match status" value="1"/>
</dbReference>
<dbReference type="Pfam" id="PF00398">
    <property type="entry name" value="RrnaAD"/>
    <property type="match status" value="1"/>
</dbReference>
<dbReference type="SMART" id="SM00650">
    <property type="entry name" value="rADc"/>
    <property type="match status" value="1"/>
</dbReference>
<dbReference type="SUPFAM" id="SSF53335">
    <property type="entry name" value="S-adenosyl-L-methionine-dependent methyltransferases"/>
    <property type="match status" value="1"/>
</dbReference>
<dbReference type="PROSITE" id="PS01131">
    <property type="entry name" value="RRNA_A_DIMETH"/>
    <property type="match status" value="1"/>
</dbReference>
<dbReference type="PROSITE" id="PS51689">
    <property type="entry name" value="SAM_RNA_A_N6_MT"/>
    <property type="match status" value="1"/>
</dbReference>
<evidence type="ECO:0000255" key="1">
    <source>
        <dbReference type="HAMAP-Rule" id="MF_00607"/>
    </source>
</evidence>
<keyword id="KW-0963">Cytoplasm</keyword>
<keyword id="KW-0489">Methyltransferase</keyword>
<keyword id="KW-0694">RNA-binding</keyword>
<keyword id="KW-0698">rRNA processing</keyword>
<keyword id="KW-0949">S-adenosyl-L-methionine</keyword>
<keyword id="KW-0808">Transferase</keyword>
<feature type="chain" id="PRO_0000257345" description="Ribosomal RNA small subunit methyltransferase A">
    <location>
        <begin position="1"/>
        <end position="273"/>
    </location>
</feature>
<feature type="binding site" evidence="1">
    <location>
        <position position="18"/>
    </location>
    <ligand>
        <name>S-adenosyl-L-methionine</name>
        <dbReference type="ChEBI" id="CHEBI:59789"/>
    </ligand>
</feature>
<feature type="binding site" evidence="1">
    <location>
        <position position="20"/>
    </location>
    <ligand>
        <name>S-adenosyl-L-methionine</name>
        <dbReference type="ChEBI" id="CHEBI:59789"/>
    </ligand>
</feature>
<feature type="binding site" evidence="1">
    <location>
        <position position="45"/>
    </location>
    <ligand>
        <name>S-adenosyl-L-methionine</name>
        <dbReference type="ChEBI" id="CHEBI:59789"/>
    </ligand>
</feature>
<feature type="binding site" evidence="1">
    <location>
        <position position="66"/>
    </location>
    <ligand>
        <name>S-adenosyl-L-methionine</name>
        <dbReference type="ChEBI" id="CHEBI:59789"/>
    </ligand>
</feature>
<feature type="binding site" evidence="1">
    <location>
        <position position="91"/>
    </location>
    <ligand>
        <name>S-adenosyl-L-methionine</name>
        <dbReference type="ChEBI" id="CHEBI:59789"/>
    </ligand>
</feature>
<feature type="binding site" evidence="1">
    <location>
        <position position="113"/>
    </location>
    <ligand>
        <name>S-adenosyl-L-methionine</name>
        <dbReference type="ChEBI" id="CHEBI:59789"/>
    </ligand>
</feature>